<sequence length="63" mass="6827">MGKLTILVLVAAVLLSTQVMVQGDRDQPADRDAVPRDDKPGGTSGKFMNVLRRSGCPWDPWCG</sequence>
<evidence type="ECO:0000250" key="1">
    <source>
        <dbReference type="UniProtKB" id="P0C248"/>
    </source>
</evidence>
<evidence type="ECO:0000250" key="2">
    <source>
        <dbReference type="UniProtKB" id="P0C250"/>
    </source>
</evidence>
<evidence type="ECO:0000250" key="3">
    <source>
        <dbReference type="UniProtKB" id="P58786"/>
    </source>
</evidence>
<evidence type="ECO:0000250" key="4">
    <source>
        <dbReference type="UniProtKB" id="P58787"/>
    </source>
</evidence>
<evidence type="ECO:0000250" key="5">
    <source>
        <dbReference type="UniProtKB" id="P62903"/>
    </source>
</evidence>
<evidence type="ECO:0000250" key="6">
    <source>
        <dbReference type="UniProtKB" id="P83047"/>
    </source>
</evidence>
<evidence type="ECO:0000255" key="7"/>
<evidence type="ECO:0000256" key="8">
    <source>
        <dbReference type="SAM" id="MobiDB-lite"/>
    </source>
</evidence>
<evidence type="ECO:0000305" key="9"/>
<evidence type="ECO:0000305" key="10">
    <source>
    </source>
</evidence>
<feature type="signal peptide" evidence="7">
    <location>
        <begin position="1"/>
        <end position="23"/>
    </location>
</feature>
<feature type="propeptide" id="PRO_0000445135" evidence="9">
    <location>
        <begin position="24"/>
        <end position="54"/>
    </location>
</feature>
<feature type="peptide" id="PRO_5012253144" description="Contryphan-Mi" evidence="9">
    <location>
        <begin position="55"/>
        <end position="62"/>
    </location>
</feature>
<feature type="region of interest" description="Disordered" evidence="8">
    <location>
        <begin position="22"/>
        <end position="52"/>
    </location>
</feature>
<feature type="compositionally biased region" description="Basic and acidic residues" evidence="8">
    <location>
        <begin position="23"/>
        <end position="40"/>
    </location>
</feature>
<feature type="modified residue" description="4-hydroxyproline" evidence="3">
    <location>
        <position position="57"/>
    </location>
</feature>
<feature type="modified residue" description="D-tryptophan" evidence="3">
    <location>
        <position position="58"/>
    </location>
</feature>
<feature type="modified residue" description="Cysteine amide" evidence="3">
    <location>
        <position position="62"/>
    </location>
</feature>
<feature type="disulfide bond" evidence="3">
    <location>
        <begin position="56"/>
        <end position="62"/>
    </location>
</feature>
<name>COW_CONMI</name>
<keyword id="KW-0027">Amidation</keyword>
<keyword id="KW-0208">D-amino acid</keyword>
<keyword id="KW-1015">Disulfide bond</keyword>
<keyword id="KW-0379">Hydroxylation</keyword>
<keyword id="KW-0872">Ion channel impairing toxin</keyword>
<keyword id="KW-0528">Neurotoxin</keyword>
<keyword id="KW-0964">Secreted</keyword>
<keyword id="KW-0732">Signal</keyword>
<keyword id="KW-0800">Toxin</keyword>
<dbReference type="EMBL" id="KX289881">
    <property type="protein sequence ID" value="APX52858.1"/>
    <property type="molecule type" value="mRNA"/>
</dbReference>
<dbReference type="ConoServer" id="9760">
    <property type="toxin name" value="Contryphan-Mi precursor"/>
</dbReference>
<dbReference type="GO" id="GO:0005576">
    <property type="term" value="C:extracellular region"/>
    <property type="evidence" value="ECO:0007669"/>
    <property type="project" value="UniProtKB-SubCell"/>
</dbReference>
<dbReference type="GO" id="GO:0008200">
    <property type="term" value="F:ion channel inhibitor activity"/>
    <property type="evidence" value="ECO:0007669"/>
    <property type="project" value="InterPro"/>
</dbReference>
<dbReference type="GO" id="GO:0090729">
    <property type="term" value="F:toxin activity"/>
    <property type="evidence" value="ECO:0007669"/>
    <property type="project" value="UniProtKB-KW"/>
</dbReference>
<dbReference type="InterPro" id="IPR004214">
    <property type="entry name" value="Conotoxin"/>
</dbReference>
<dbReference type="InterPro" id="IPR011062">
    <property type="entry name" value="Contryphan_CS"/>
</dbReference>
<dbReference type="Pfam" id="PF02950">
    <property type="entry name" value="Conotoxin"/>
    <property type="match status" value="1"/>
</dbReference>
<dbReference type="PROSITE" id="PS60027">
    <property type="entry name" value="CONTRYPHAN"/>
    <property type="match status" value="1"/>
</dbReference>
<reference key="1">
    <citation type="journal article" date="2017" name="J. Proteome Res.">
        <title>Contryphan genes and mature peptides in the venom of nine cone snail species by transcriptomic and mass spectrometric analysis.</title>
        <authorList>
            <person name="Vijayasarathy M."/>
            <person name="Basheer S.M."/>
            <person name="Franklin J.B."/>
            <person name="Balaram P."/>
        </authorList>
    </citation>
    <scope>NUCLEOTIDE SEQUENCE [MRNA]</scope>
    <source>
        <tissue>Venom duct</tissue>
    </source>
</reference>
<comment type="function">
    <text evidence="1 2 5 6">Its target is unknown, but this toxin may modulate voltage-activated calcium channels (Cav) or calcium-dependent potassium channels (KCa).</text>
</comment>
<comment type="subcellular location">
    <subcellularLocation>
        <location evidence="10">Secreted</location>
    </subcellularLocation>
</comment>
<comment type="tissue specificity">
    <text evidence="10">Expressed by the venom duct.</text>
</comment>
<comment type="domain">
    <text evidence="9">The cysteine framework is C-C.</text>
</comment>
<comment type="miscellaneous">
    <text evidence="4">Exists in two forms, due to cis-trans isomerization at 56-Cys-hydroxyPro-57. The cis conformation is the major form.</text>
</comment>
<comment type="similarity">
    <text evidence="9">Belongs to the O2 superfamily. Contryphan family.</text>
</comment>
<organism>
    <name type="scientific">Conus miles</name>
    <name type="common">Soldier cone</name>
    <name type="synonym">Mile cone</name>
    <dbReference type="NCBI Taxonomy" id="69564"/>
    <lineage>
        <taxon>Eukaryota</taxon>
        <taxon>Metazoa</taxon>
        <taxon>Spiralia</taxon>
        <taxon>Lophotrochozoa</taxon>
        <taxon>Mollusca</taxon>
        <taxon>Gastropoda</taxon>
        <taxon>Caenogastropoda</taxon>
        <taxon>Neogastropoda</taxon>
        <taxon>Conoidea</taxon>
        <taxon>Conidae</taxon>
        <taxon>Conus</taxon>
        <taxon>Rhizoconus</taxon>
    </lineage>
</organism>
<proteinExistence type="inferred from homology"/>
<protein>
    <recommendedName>
        <fullName evidence="9">Contryphan-Mi</fullName>
    </recommendedName>
</protein>
<accession>A0A1P8NVS3</accession>